<gene>
    <name type="primary">DNAH10OS</name>
</gene>
<organism>
    <name type="scientific">Homo sapiens</name>
    <name type="common">Human</name>
    <dbReference type="NCBI Taxonomy" id="9606"/>
    <lineage>
        <taxon>Eukaryota</taxon>
        <taxon>Metazoa</taxon>
        <taxon>Chordata</taxon>
        <taxon>Craniata</taxon>
        <taxon>Vertebrata</taxon>
        <taxon>Euteleostomi</taxon>
        <taxon>Mammalia</taxon>
        <taxon>Eutheria</taxon>
        <taxon>Euarchontoglires</taxon>
        <taxon>Primates</taxon>
        <taxon>Haplorrhini</taxon>
        <taxon>Catarrhini</taxon>
        <taxon>Hominidae</taxon>
        <taxon>Homo</taxon>
    </lineage>
</organism>
<reference key="1">
    <citation type="journal article" date="2004" name="Nat. Genet.">
        <title>Complete sequencing and characterization of 21,243 full-length human cDNAs.</title>
        <authorList>
            <person name="Ota T."/>
            <person name="Suzuki Y."/>
            <person name="Nishikawa T."/>
            <person name="Otsuki T."/>
            <person name="Sugiyama T."/>
            <person name="Irie R."/>
            <person name="Wakamatsu A."/>
            <person name="Hayashi K."/>
            <person name="Sato H."/>
            <person name="Nagai K."/>
            <person name="Kimura K."/>
            <person name="Makita H."/>
            <person name="Sekine M."/>
            <person name="Obayashi M."/>
            <person name="Nishi T."/>
            <person name="Shibahara T."/>
            <person name="Tanaka T."/>
            <person name="Ishii S."/>
            <person name="Yamamoto J."/>
            <person name="Saito K."/>
            <person name="Kawai Y."/>
            <person name="Isono Y."/>
            <person name="Nakamura Y."/>
            <person name="Nagahari K."/>
            <person name="Murakami K."/>
            <person name="Yasuda T."/>
            <person name="Iwayanagi T."/>
            <person name="Wagatsuma M."/>
            <person name="Shiratori A."/>
            <person name="Sudo H."/>
            <person name="Hosoiri T."/>
            <person name="Kaku Y."/>
            <person name="Kodaira H."/>
            <person name="Kondo H."/>
            <person name="Sugawara M."/>
            <person name="Takahashi M."/>
            <person name="Kanda K."/>
            <person name="Yokoi T."/>
            <person name="Furuya T."/>
            <person name="Kikkawa E."/>
            <person name="Omura Y."/>
            <person name="Abe K."/>
            <person name="Kamihara K."/>
            <person name="Katsuta N."/>
            <person name="Sato K."/>
            <person name="Tanikawa M."/>
            <person name="Yamazaki M."/>
            <person name="Ninomiya K."/>
            <person name="Ishibashi T."/>
            <person name="Yamashita H."/>
            <person name="Murakawa K."/>
            <person name="Fujimori K."/>
            <person name="Tanai H."/>
            <person name="Kimata M."/>
            <person name="Watanabe M."/>
            <person name="Hiraoka S."/>
            <person name="Chiba Y."/>
            <person name="Ishida S."/>
            <person name="Ono Y."/>
            <person name="Takiguchi S."/>
            <person name="Watanabe S."/>
            <person name="Yosida M."/>
            <person name="Hotuta T."/>
            <person name="Kusano J."/>
            <person name="Kanehori K."/>
            <person name="Takahashi-Fujii A."/>
            <person name="Hara H."/>
            <person name="Tanase T.-O."/>
            <person name="Nomura Y."/>
            <person name="Togiya S."/>
            <person name="Komai F."/>
            <person name="Hara R."/>
            <person name="Takeuchi K."/>
            <person name="Arita M."/>
            <person name="Imose N."/>
            <person name="Musashino K."/>
            <person name="Yuuki H."/>
            <person name="Oshima A."/>
            <person name="Sasaki N."/>
            <person name="Aotsuka S."/>
            <person name="Yoshikawa Y."/>
            <person name="Matsunawa H."/>
            <person name="Ichihara T."/>
            <person name="Shiohata N."/>
            <person name="Sano S."/>
            <person name="Moriya S."/>
            <person name="Momiyama H."/>
            <person name="Satoh N."/>
            <person name="Takami S."/>
            <person name="Terashima Y."/>
            <person name="Suzuki O."/>
            <person name="Nakagawa S."/>
            <person name="Senoh A."/>
            <person name="Mizoguchi H."/>
            <person name="Goto Y."/>
            <person name="Shimizu F."/>
            <person name="Wakebe H."/>
            <person name="Hishigaki H."/>
            <person name="Watanabe T."/>
            <person name="Sugiyama A."/>
            <person name="Takemoto M."/>
            <person name="Kawakami B."/>
            <person name="Yamazaki M."/>
            <person name="Watanabe K."/>
            <person name="Kumagai A."/>
            <person name="Itakura S."/>
            <person name="Fukuzumi Y."/>
            <person name="Fujimori Y."/>
            <person name="Komiyama M."/>
            <person name="Tashiro H."/>
            <person name="Tanigami A."/>
            <person name="Fujiwara T."/>
            <person name="Ono T."/>
            <person name="Yamada K."/>
            <person name="Fujii Y."/>
            <person name="Ozaki K."/>
            <person name="Hirao M."/>
            <person name="Ohmori Y."/>
            <person name="Kawabata A."/>
            <person name="Hikiji T."/>
            <person name="Kobatake N."/>
            <person name="Inagaki H."/>
            <person name="Ikema Y."/>
            <person name="Okamoto S."/>
            <person name="Okitani R."/>
            <person name="Kawakami T."/>
            <person name="Noguchi S."/>
            <person name="Itoh T."/>
            <person name="Shigeta K."/>
            <person name="Senba T."/>
            <person name="Matsumura K."/>
            <person name="Nakajima Y."/>
            <person name="Mizuno T."/>
            <person name="Morinaga M."/>
            <person name="Sasaki M."/>
            <person name="Togashi T."/>
            <person name="Oyama M."/>
            <person name="Hata H."/>
            <person name="Watanabe M."/>
            <person name="Komatsu T."/>
            <person name="Mizushima-Sugano J."/>
            <person name="Satoh T."/>
            <person name="Shirai Y."/>
            <person name="Takahashi Y."/>
            <person name="Nakagawa K."/>
            <person name="Okumura K."/>
            <person name="Nagase T."/>
            <person name="Nomura N."/>
            <person name="Kikuchi H."/>
            <person name="Masuho Y."/>
            <person name="Yamashita R."/>
            <person name="Nakai K."/>
            <person name="Yada T."/>
            <person name="Nakamura Y."/>
            <person name="Ohara O."/>
            <person name="Isogai T."/>
            <person name="Sugano S."/>
        </authorList>
    </citation>
    <scope>NUCLEOTIDE SEQUENCE [LARGE SCALE MRNA]</scope>
    <source>
        <tissue>Spleen</tissue>
    </source>
</reference>
<reference key="2">
    <citation type="journal article" date="2006" name="Nature">
        <title>The finished DNA sequence of human chromosome 12.</title>
        <authorList>
            <person name="Scherer S.E."/>
            <person name="Muzny D.M."/>
            <person name="Buhay C.J."/>
            <person name="Chen R."/>
            <person name="Cree A."/>
            <person name="Ding Y."/>
            <person name="Dugan-Rocha S."/>
            <person name="Gill R."/>
            <person name="Gunaratne P."/>
            <person name="Harris R.A."/>
            <person name="Hawes A.C."/>
            <person name="Hernandez J."/>
            <person name="Hodgson A.V."/>
            <person name="Hume J."/>
            <person name="Jackson A."/>
            <person name="Khan Z.M."/>
            <person name="Kovar-Smith C."/>
            <person name="Lewis L.R."/>
            <person name="Lozado R.J."/>
            <person name="Metzker M.L."/>
            <person name="Milosavljevic A."/>
            <person name="Miner G.R."/>
            <person name="Montgomery K.T."/>
            <person name="Morgan M.B."/>
            <person name="Nazareth L.V."/>
            <person name="Scott G."/>
            <person name="Sodergren E."/>
            <person name="Song X.-Z."/>
            <person name="Steffen D."/>
            <person name="Lovering R.C."/>
            <person name="Wheeler D.A."/>
            <person name="Worley K.C."/>
            <person name="Yuan Y."/>
            <person name="Zhang Z."/>
            <person name="Adams C.Q."/>
            <person name="Ansari-Lari M.A."/>
            <person name="Ayele M."/>
            <person name="Brown M.J."/>
            <person name="Chen G."/>
            <person name="Chen Z."/>
            <person name="Clerc-Blankenburg K.P."/>
            <person name="Davis C."/>
            <person name="Delgado O."/>
            <person name="Dinh H.H."/>
            <person name="Draper H."/>
            <person name="Gonzalez-Garay M.L."/>
            <person name="Havlak P."/>
            <person name="Jackson L.R."/>
            <person name="Jacob L.S."/>
            <person name="Kelly S.H."/>
            <person name="Li L."/>
            <person name="Li Z."/>
            <person name="Liu J."/>
            <person name="Liu W."/>
            <person name="Lu J."/>
            <person name="Maheshwari M."/>
            <person name="Nguyen B.-V."/>
            <person name="Okwuonu G.O."/>
            <person name="Pasternak S."/>
            <person name="Perez L.M."/>
            <person name="Plopper F.J.H."/>
            <person name="Santibanez J."/>
            <person name="Shen H."/>
            <person name="Tabor P.E."/>
            <person name="Verduzco D."/>
            <person name="Waldron L."/>
            <person name="Wang Q."/>
            <person name="Williams G.A."/>
            <person name="Zhang J."/>
            <person name="Zhou J."/>
            <person name="Allen C.C."/>
            <person name="Amin A.G."/>
            <person name="Anyalebechi V."/>
            <person name="Bailey M."/>
            <person name="Barbaria J.A."/>
            <person name="Bimage K.E."/>
            <person name="Bryant N.P."/>
            <person name="Burch P.E."/>
            <person name="Burkett C.E."/>
            <person name="Burrell K.L."/>
            <person name="Calderon E."/>
            <person name="Cardenas V."/>
            <person name="Carter K."/>
            <person name="Casias K."/>
            <person name="Cavazos I."/>
            <person name="Cavazos S.R."/>
            <person name="Ceasar H."/>
            <person name="Chacko J."/>
            <person name="Chan S.N."/>
            <person name="Chavez D."/>
            <person name="Christopoulos C."/>
            <person name="Chu J."/>
            <person name="Cockrell R."/>
            <person name="Cox C.D."/>
            <person name="Dang M."/>
            <person name="Dathorne S.R."/>
            <person name="David R."/>
            <person name="Davis C.M."/>
            <person name="Davy-Carroll L."/>
            <person name="Deshazo D.R."/>
            <person name="Donlin J.E."/>
            <person name="D'Souza L."/>
            <person name="Eaves K.A."/>
            <person name="Egan A."/>
            <person name="Emery-Cohen A.J."/>
            <person name="Escotto M."/>
            <person name="Flagg N."/>
            <person name="Forbes L.D."/>
            <person name="Gabisi A.M."/>
            <person name="Garza M."/>
            <person name="Hamilton C."/>
            <person name="Henderson N."/>
            <person name="Hernandez O."/>
            <person name="Hines S."/>
            <person name="Hogues M.E."/>
            <person name="Huang M."/>
            <person name="Idlebird D.G."/>
            <person name="Johnson R."/>
            <person name="Jolivet A."/>
            <person name="Jones S."/>
            <person name="Kagan R."/>
            <person name="King L.M."/>
            <person name="Leal B."/>
            <person name="Lebow H."/>
            <person name="Lee S."/>
            <person name="LeVan J.M."/>
            <person name="Lewis L.C."/>
            <person name="London P."/>
            <person name="Lorensuhewa L.M."/>
            <person name="Loulseged H."/>
            <person name="Lovett D.A."/>
            <person name="Lucier A."/>
            <person name="Lucier R.L."/>
            <person name="Ma J."/>
            <person name="Madu R.C."/>
            <person name="Mapua P."/>
            <person name="Martindale A.D."/>
            <person name="Martinez E."/>
            <person name="Massey E."/>
            <person name="Mawhiney S."/>
            <person name="Meador M.G."/>
            <person name="Mendez S."/>
            <person name="Mercado C."/>
            <person name="Mercado I.C."/>
            <person name="Merritt C.E."/>
            <person name="Miner Z.L."/>
            <person name="Minja E."/>
            <person name="Mitchell T."/>
            <person name="Mohabbat F."/>
            <person name="Mohabbat K."/>
            <person name="Montgomery B."/>
            <person name="Moore N."/>
            <person name="Morris S."/>
            <person name="Munidasa M."/>
            <person name="Ngo R.N."/>
            <person name="Nguyen N.B."/>
            <person name="Nickerson E."/>
            <person name="Nwaokelemeh O.O."/>
            <person name="Nwokenkwo S."/>
            <person name="Obregon M."/>
            <person name="Oguh M."/>
            <person name="Oragunye N."/>
            <person name="Oviedo R.J."/>
            <person name="Parish B.J."/>
            <person name="Parker D.N."/>
            <person name="Parrish J."/>
            <person name="Parks K.L."/>
            <person name="Paul H.A."/>
            <person name="Payton B.A."/>
            <person name="Perez A."/>
            <person name="Perrin W."/>
            <person name="Pickens A."/>
            <person name="Primus E.L."/>
            <person name="Pu L.-L."/>
            <person name="Puazo M."/>
            <person name="Quiles M.M."/>
            <person name="Quiroz J.B."/>
            <person name="Rabata D."/>
            <person name="Reeves K."/>
            <person name="Ruiz S.J."/>
            <person name="Shao H."/>
            <person name="Sisson I."/>
            <person name="Sonaike T."/>
            <person name="Sorelle R.P."/>
            <person name="Sutton A.E."/>
            <person name="Svatek A.F."/>
            <person name="Svetz L.A."/>
            <person name="Tamerisa K.S."/>
            <person name="Taylor T.R."/>
            <person name="Teague B."/>
            <person name="Thomas N."/>
            <person name="Thorn R.D."/>
            <person name="Trejos Z.Y."/>
            <person name="Trevino B.K."/>
            <person name="Ukegbu O.N."/>
            <person name="Urban J.B."/>
            <person name="Vasquez L.I."/>
            <person name="Vera V.A."/>
            <person name="Villasana D.M."/>
            <person name="Wang L."/>
            <person name="Ward-Moore S."/>
            <person name="Warren J.T."/>
            <person name="Wei X."/>
            <person name="White F."/>
            <person name="Williamson A.L."/>
            <person name="Wleczyk R."/>
            <person name="Wooden H.S."/>
            <person name="Wooden S.H."/>
            <person name="Yen J."/>
            <person name="Yoon L."/>
            <person name="Yoon V."/>
            <person name="Zorrilla S.E."/>
            <person name="Nelson D."/>
            <person name="Kucherlapati R."/>
            <person name="Weinstock G."/>
            <person name="Gibbs R.A."/>
        </authorList>
    </citation>
    <scope>NUCLEOTIDE SEQUENCE [LARGE SCALE GENOMIC DNA]</scope>
</reference>
<reference key="3">
    <citation type="journal article" date="2009" name="Genome Res.">
        <title>Recent de novo origin of human protein-coding genes.</title>
        <authorList>
            <person name="Knowles D.G."/>
            <person name="McLysaght A."/>
        </authorList>
    </citation>
    <scope>IDENTIFICATION</scope>
</reference>
<feature type="chain" id="PRO_0000411099" description="Uncharacterized protein DNAH10OS">
    <location>
        <begin position="1"/>
        <end position="163"/>
    </location>
</feature>
<feature type="region of interest" description="Disordered" evidence="1">
    <location>
        <begin position="1"/>
        <end position="78"/>
    </location>
</feature>
<feature type="region of interest" description="Disordered" evidence="1">
    <location>
        <begin position="115"/>
        <end position="163"/>
    </location>
</feature>
<comment type="miscellaneous">
    <text>This protein has no orthologs in other species and appears to be the product of a protein-coding gene which has arisen since divergence from chimp.</text>
</comment>
<accession>P0CZ25</accession>
<keyword id="KW-1185">Reference proteome</keyword>
<dbReference type="EMBL" id="AK127211">
    <property type="status" value="NOT_ANNOTATED_CDS"/>
    <property type="molecule type" value="mRNA"/>
</dbReference>
<dbReference type="BioMuta" id="DNAH10OS"/>
<dbReference type="jPOST" id="P0CZ25"/>
<dbReference type="MassIVE" id="P0CZ25"/>
<dbReference type="PaxDb" id="9606-ENSP00000422769"/>
<dbReference type="PeptideAtlas" id="P0CZ25"/>
<dbReference type="ProteomicsDB" id="52528"/>
<dbReference type="UCSC" id="uc058uvm.1">
    <property type="organism name" value="human"/>
</dbReference>
<dbReference type="AGR" id="HGNC:37121"/>
<dbReference type="GeneCards" id="DNAH10OS"/>
<dbReference type="HGNC" id="HGNC:37121">
    <property type="gene designation" value="DNAH10OS"/>
</dbReference>
<dbReference type="MalaCards" id="DNAH10OS"/>
<dbReference type="neXtProt" id="NX_P0CZ25"/>
<dbReference type="HOGENOM" id="CLU_1626481_0_0_1"/>
<dbReference type="InParanoid" id="P0CZ25"/>
<dbReference type="PAN-GO" id="P0CZ25">
    <property type="GO annotations" value="0 GO annotations based on evolutionary models"/>
</dbReference>
<dbReference type="PathwayCommons" id="P0CZ25"/>
<dbReference type="SignaLink" id="P0CZ25"/>
<dbReference type="Pharos" id="P0CZ25">
    <property type="development level" value="Tdark"/>
</dbReference>
<dbReference type="PRO" id="PR:P0CZ25"/>
<dbReference type="Proteomes" id="UP000005640">
    <property type="component" value="Unplaced"/>
</dbReference>
<dbReference type="RNAct" id="P0CZ25">
    <property type="molecule type" value="protein"/>
</dbReference>
<sequence>MHSLPRSGSIRRTHSDTQATGWPPPQRIGDSPGPSPAFLSCPPSLCGGAAQTGDPVALPHGPEKWVWGGGLSPRNPHSWGIKAHGLRPPWAPRLERCMVPESEWAPWQPQLPCEPKWLGSRKSKPHRESGLRGGGPSRCAKRGTHSCGPRESGGPDTCHLPCH</sequence>
<evidence type="ECO:0000256" key="1">
    <source>
        <dbReference type="SAM" id="MobiDB-lite"/>
    </source>
</evidence>
<protein>
    <recommendedName>
        <fullName>Uncharacterized protein DNAH10OS</fullName>
    </recommendedName>
</protein>
<name>D10OS_HUMAN</name>
<proteinExistence type="evidence at transcript level"/>